<gene>
    <name type="primary">GMPM1</name>
</gene>
<organism>
    <name type="scientific">Glycine max</name>
    <name type="common">Soybean</name>
    <name type="synonym">Glycine hispida</name>
    <dbReference type="NCBI Taxonomy" id="3847"/>
    <lineage>
        <taxon>Eukaryota</taxon>
        <taxon>Viridiplantae</taxon>
        <taxon>Streptophyta</taxon>
        <taxon>Embryophyta</taxon>
        <taxon>Tracheophyta</taxon>
        <taxon>Spermatophyta</taxon>
        <taxon>Magnoliopsida</taxon>
        <taxon>eudicotyledons</taxon>
        <taxon>Gunneridae</taxon>
        <taxon>Pentapetalae</taxon>
        <taxon>rosids</taxon>
        <taxon>fabids</taxon>
        <taxon>Fabales</taxon>
        <taxon>Fabaceae</taxon>
        <taxon>Papilionoideae</taxon>
        <taxon>50 kb inversion clade</taxon>
        <taxon>NPAAA clade</taxon>
        <taxon>indigoferoid/millettioid clade</taxon>
        <taxon>Phaseoleae</taxon>
        <taxon>Glycine</taxon>
        <taxon>Glycine subgen. Soja</taxon>
    </lineage>
</organism>
<dbReference type="EMBL" id="M80666">
    <property type="protein sequence ID" value="AAA33984.1"/>
    <property type="molecule type" value="mRNA"/>
</dbReference>
<dbReference type="PIR" id="T07659">
    <property type="entry name" value="T07659"/>
</dbReference>
<dbReference type="RefSeq" id="NP_001238562.1">
    <property type="nucleotide sequence ID" value="NM_001251633.1"/>
</dbReference>
<dbReference type="SMR" id="Q01417"/>
<dbReference type="FunCoup" id="Q01417">
    <property type="interactions" value="80"/>
</dbReference>
<dbReference type="STRING" id="3847.Q01417"/>
<dbReference type="PaxDb" id="3847-GLYMA19G32920.1"/>
<dbReference type="EnsemblPlants" id="KRG95375">
    <property type="protein sequence ID" value="KRG95375"/>
    <property type="gene ID" value="GLYMA_19G147200"/>
</dbReference>
<dbReference type="GeneID" id="547828"/>
<dbReference type="Gramene" id="KRG95375">
    <property type="protein sequence ID" value="KRG95375"/>
    <property type="gene ID" value="GLYMA_19G147200"/>
</dbReference>
<dbReference type="KEGG" id="gmx:547828"/>
<dbReference type="eggNOG" id="ENOG502S22N">
    <property type="taxonomic scope" value="Eukaryota"/>
</dbReference>
<dbReference type="HOGENOM" id="CLU_114722_0_0_1"/>
<dbReference type="InParanoid" id="Q01417"/>
<dbReference type="OMA" id="DMATQKK"/>
<dbReference type="OrthoDB" id="758082at2759"/>
<dbReference type="Proteomes" id="UP000008827">
    <property type="component" value="Chromosome 19"/>
</dbReference>
<dbReference type="GO" id="GO:0048030">
    <property type="term" value="F:disaccharide binding"/>
    <property type="evidence" value="ECO:0000314"/>
    <property type="project" value="CAFA"/>
</dbReference>
<dbReference type="GO" id="GO:0070492">
    <property type="term" value="F:oligosaccharide binding"/>
    <property type="evidence" value="ECO:0000314"/>
    <property type="project" value="CAFA"/>
</dbReference>
<dbReference type="GO" id="GO:0031210">
    <property type="term" value="F:phosphatidylcholine binding"/>
    <property type="evidence" value="ECO:0000314"/>
    <property type="project" value="CAFA"/>
</dbReference>
<dbReference type="GO" id="GO:0009793">
    <property type="term" value="P:embryo development ending in seed dormancy"/>
    <property type="evidence" value="ECO:0007669"/>
    <property type="project" value="InterPro"/>
</dbReference>
<dbReference type="DisProt" id="DP00664"/>
<dbReference type="InterPro" id="IPR005513">
    <property type="entry name" value="LEA_1"/>
</dbReference>
<dbReference type="PANTHER" id="PTHR33493:SF2">
    <property type="entry name" value="LATE EMBRYOGENESIS ABUNDANT PROTEIN 46"/>
    <property type="match status" value="1"/>
</dbReference>
<dbReference type="PANTHER" id="PTHR33493">
    <property type="entry name" value="LATE EMBRYOGENESIS ABUNDANT PROTEIN 6-RELATED"/>
    <property type="match status" value="1"/>
</dbReference>
<dbReference type="Pfam" id="PF03760">
    <property type="entry name" value="LEA_1"/>
    <property type="match status" value="1"/>
</dbReference>
<name>PM1_SOYBN</name>
<comment type="similarity">
    <text evidence="2">Belongs to the LEA type 1 family.</text>
</comment>
<feature type="chain" id="PRO_0000221244" description="18 kDa seed maturation protein">
    <location>
        <begin position="1"/>
        <end position="173"/>
    </location>
</feature>
<feature type="region of interest" description="Disordered" evidence="1">
    <location>
        <begin position="1"/>
        <end position="173"/>
    </location>
</feature>
<feature type="compositionally biased region" description="Basic and acidic residues" evidence="1">
    <location>
        <begin position="1"/>
        <end position="12"/>
    </location>
</feature>
<feature type="compositionally biased region" description="Basic and acidic residues" evidence="1">
    <location>
        <begin position="25"/>
        <end position="68"/>
    </location>
</feature>
<feature type="compositionally biased region" description="Polar residues" evidence="1">
    <location>
        <begin position="70"/>
        <end position="79"/>
    </location>
</feature>
<feature type="compositionally biased region" description="Low complexity" evidence="1">
    <location>
        <begin position="92"/>
        <end position="106"/>
    </location>
</feature>
<keyword id="KW-1185">Reference proteome</keyword>
<protein>
    <recommendedName>
        <fullName>18 kDa seed maturation protein</fullName>
    </recommendedName>
</protein>
<proteinExistence type="evidence at transcript level"/>
<sequence length="173" mass="17606">MQGGKKAGESIKETATNIGASAKAGMEKTKATVQEKAERMTARDPVQKELATQKKEAKMNQAELDKQAARQHNTAAKQSATTAGHMGHGHHTTGTGTGTATYSTTGEYGQPMGAHQTSAMPGHGTGQPTGHVTEGVVGSHPIGTNRGPGGTATAHNTRAGGKPNDYGYGTGGT</sequence>
<accession>Q01417</accession>
<evidence type="ECO:0000256" key="1">
    <source>
        <dbReference type="SAM" id="MobiDB-lite"/>
    </source>
</evidence>
<evidence type="ECO:0000305" key="2"/>
<reference key="1">
    <citation type="journal article" date="1992" name="Plant Physiol.">
        <title>Nucleotide sequences of a soybean cDNA encoding an 18 kD late embryogenesis abundant protein.</title>
        <authorList>
            <person name="Chen Z.Y."/>
            <person name="Hsing Y.I.C."/>
            <person name="Lee P.F."/>
            <person name="Chow T.Y."/>
        </authorList>
    </citation>
    <scope>NUCLEOTIDE SEQUENCE [MRNA]</scope>
    <source>
        <strain>cv. Williams 92</strain>
    </source>
</reference>